<feature type="chain" id="PRO_0000438137" description="Disease resistance protein CHS1">
    <location>
        <begin position="1"/>
        <end position="420"/>
    </location>
</feature>
<feature type="domain" description="TIR" evidence="2">
    <location>
        <begin position="12"/>
        <end position="167"/>
    </location>
</feature>
<feature type="domain" description="NB-ARC" evidence="1">
    <location>
        <begin position="185"/>
        <end position="406"/>
    </location>
</feature>
<feature type="active site" evidence="2">
    <location>
        <position position="86"/>
    </location>
</feature>
<feature type="mutagenesis site" description="In chs1-1 and chs1-2; Increased leaves sensitivity to chilling stress in an EDS1- and PAD4-dependent manner, killed by several days of exposure to temperatures below 18 degrees Celsius. Alterations in photosynthetic complexes, chloroplast ultrastructure, and thylakoid membrane integrity and lipid composition precede leaf cell death. Leaf chlorosis and electrolyte leakage after exposure to chilling temperatures associated with abnormal steryl-esters accumulation and reduced sterols levels. Chilling leads to xanthophyll cycle activation and accumulation of tocopherol. Activation of immune responses by chilling; increased salicylic acid (SA) and hydrogen peroxide H(2)O(2) production, extensive cell death and pathogenesis-related (PR) genes expression at 13 degrees Celsius. Massive necrotic response to virulent Pseudomonas syringae pv. tomato infection, but normal bacterial proliferation. Increased permeability to boric acid." evidence="3 4 5 6">
    <original>A</original>
    <variation>T</variation>
    <location>
        <position position="10"/>
    </location>
</feature>
<evidence type="ECO:0000255" key="1"/>
<evidence type="ECO:0000255" key="2">
    <source>
        <dbReference type="PROSITE-ProRule" id="PRU00204"/>
    </source>
</evidence>
<evidence type="ECO:0000269" key="3">
    <source>
    </source>
</evidence>
<evidence type="ECO:0000269" key="4">
    <source>
    </source>
</evidence>
<evidence type="ECO:0000269" key="5">
    <source>
    </source>
</evidence>
<evidence type="ECO:0000269" key="6">
    <source>
    </source>
</evidence>
<evidence type="ECO:0000303" key="7">
    <source>
    </source>
</evidence>
<evidence type="ECO:0000305" key="8"/>
<evidence type="ECO:0000312" key="9">
    <source>
        <dbReference type="Araport" id="AT1G17610"/>
    </source>
</evidence>
<evidence type="ECO:0000312" key="10">
    <source>
        <dbReference type="EMBL" id="AAF79471.1"/>
    </source>
</evidence>
<keyword id="KW-0963">Cytoplasm</keyword>
<keyword id="KW-0378">Hydrolase</keyword>
<keyword id="KW-0520">NAD</keyword>
<keyword id="KW-0539">Nucleus</keyword>
<keyword id="KW-0611">Plant defense</keyword>
<keyword id="KW-1185">Reference proteome</keyword>
<proteinExistence type="evidence at protein level"/>
<gene>
    <name evidence="7" type="primary">CHS1</name>
    <name evidence="9" type="ordered locus">At1g17610</name>
    <name evidence="10" type="ORF">F1L3.31</name>
</gene>
<name>CHS1_ARATH</name>
<organism>
    <name type="scientific">Arabidopsis thaliana</name>
    <name type="common">Mouse-ear cress</name>
    <dbReference type="NCBI Taxonomy" id="3702"/>
    <lineage>
        <taxon>Eukaryota</taxon>
        <taxon>Viridiplantae</taxon>
        <taxon>Streptophyta</taxon>
        <taxon>Embryophyta</taxon>
        <taxon>Tracheophyta</taxon>
        <taxon>Spermatophyta</taxon>
        <taxon>Magnoliopsida</taxon>
        <taxon>eudicotyledons</taxon>
        <taxon>Gunneridae</taxon>
        <taxon>Pentapetalae</taxon>
        <taxon>rosids</taxon>
        <taxon>malvids</taxon>
        <taxon>Brassicales</taxon>
        <taxon>Brassicaceae</taxon>
        <taxon>Camelineae</taxon>
        <taxon>Arabidopsis</taxon>
    </lineage>
</organism>
<dbReference type="EC" id="3.2.2.6" evidence="2"/>
<dbReference type="EMBL" id="AC022492">
    <property type="protein sequence ID" value="AAF79471.1"/>
    <property type="status" value="ALT_SEQ"/>
    <property type="molecule type" value="Genomic_DNA"/>
</dbReference>
<dbReference type="EMBL" id="CP002684">
    <property type="protein sequence ID" value="AEE29613.1"/>
    <property type="molecule type" value="Genomic_DNA"/>
</dbReference>
<dbReference type="EMBL" id="CP002684">
    <property type="protein sequence ID" value="ANM59197.1"/>
    <property type="molecule type" value="Genomic_DNA"/>
</dbReference>
<dbReference type="RefSeq" id="NP_001319029.1">
    <property type="nucleotide sequence ID" value="NM_001332314.1"/>
</dbReference>
<dbReference type="RefSeq" id="NP_173204.1">
    <property type="nucleotide sequence ID" value="NM_101623.4"/>
</dbReference>
<dbReference type="SMR" id="F4I902"/>
<dbReference type="FunCoup" id="F4I902">
    <property type="interactions" value="4"/>
</dbReference>
<dbReference type="STRING" id="3702.F4I902"/>
<dbReference type="PaxDb" id="3702-AT1G17610.1"/>
<dbReference type="ProteomicsDB" id="246965"/>
<dbReference type="EnsemblPlants" id="AT1G17610.1">
    <property type="protein sequence ID" value="AT1G17610.1"/>
    <property type="gene ID" value="AT1G17610"/>
</dbReference>
<dbReference type="EnsemblPlants" id="AT1G17610.2">
    <property type="protein sequence ID" value="AT1G17610.2"/>
    <property type="gene ID" value="AT1G17610"/>
</dbReference>
<dbReference type="GeneID" id="838337"/>
<dbReference type="Gramene" id="AT1G17610.1">
    <property type="protein sequence ID" value="AT1G17610.1"/>
    <property type="gene ID" value="AT1G17610"/>
</dbReference>
<dbReference type="Gramene" id="AT1G17610.2">
    <property type="protein sequence ID" value="AT1G17610.2"/>
    <property type="gene ID" value="AT1G17610"/>
</dbReference>
<dbReference type="KEGG" id="ath:AT1G17610"/>
<dbReference type="Araport" id="AT1G17610"/>
<dbReference type="TAIR" id="AT1G17610">
    <property type="gene designation" value="CHS1"/>
</dbReference>
<dbReference type="HOGENOM" id="CLU_001561_2_3_1"/>
<dbReference type="InParanoid" id="F4I902"/>
<dbReference type="OMA" id="HGTHRIK"/>
<dbReference type="OrthoDB" id="1056515at2759"/>
<dbReference type="PRO" id="PR:F4I902"/>
<dbReference type="Proteomes" id="UP000006548">
    <property type="component" value="Chromosome 1"/>
</dbReference>
<dbReference type="ExpressionAtlas" id="F4I902">
    <property type="expression patterns" value="baseline and differential"/>
</dbReference>
<dbReference type="GO" id="GO:0005737">
    <property type="term" value="C:cytoplasm"/>
    <property type="evidence" value="ECO:0007669"/>
    <property type="project" value="UniProtKB-SubCell"/>
</dbReference>
<dbReference type="GO" id="GO:0005634">
    <property type="term" value="C:nucleus"/>
    <property type="evidence" value="ECO:0007669"/>
    <property type="project" value="UniProtKB-SubCell"/>
</dbReference>
<dbReference type="GO" id="GO:0043531">
    <property type="term" value="F:ADP binding"/>
    <property type="evidence" value="ECO:0007669"/>
    <property type="project" value="InterPro"/>
</dbReference>
<dbReference type="GO" id="GO:0061809">
    <property type="term" value="F:NAD+ nucleosidase activity, cyclic ADP-ribose generating"/>
    <property type="evidence" value="ECO:0007669"/>
    <property type="project" value="UniProtKB-EC"/>
</dbReference>
<dbReference type="GO" id="GO:0046713">
    <property type="term" value="P:borate transport"/>
    <property type="evidence" value="ECO:0000315"/>
    <property type="project" value="TAIR"/>
</dbReference>
<dbReference type="GO" id="GO:0006952">
    <property type="term" value="P:defense response"/>
    <property type="evidence" value="ECO:0007669"/>
    <property type="project" value="UniProtKB-KW"/>
</dbReference>
<dbReference type="GO" id="GO:0007165">
    <property type="term" value="P:signal transduction"/>
    <property type="evidence" value="ECO:0007669"/>
    <property type="project" value="InterPro"/>
</dbReference>
<dbReference type="Gene3D" id="1.10.8.430">
    <property type="entry name" value="Helical domain of apoptotic protease-activating factors"/>
    <property type="match status" value="1"/>
</dbReference>
<dbReference type="Gene3D" id="3.40.50.300">
    <property type="entry name" value="P-loop containing nucleotide triphosphate hydrolases"/>
    <property type="match status" value="1"/>
</dbReference>
<dbReference type="Gene3D" id="3.40.50.10140">
    <property type="entry name" value="Toll/interleukin-1 receptor homology (TIR) domain"/>
    <property type="match status" value="1"/>
</dbReference>
<dbReference type="InterPro" id="IPR042197">
    <property type="entry name" value="Apaf_helical"/>
</dbReference>
<dbReference type="InterPro" id="IPR044974">
    <property type="entry name" value="Disease_R_plants"/>
</dbReference>
<dbReference type="InterPro" id="IPR002182">
    <property type="entry name" value="NB-ARC"/>
</dbReference>
<dbReference type="InterPro" id="IPR027417">
    <property type="entry name" value="P-loop_NTPase"/>
</dbReference>
<dbReference type="InterPro" id="IPR000157">
    <property type="entry name" value="TIR_dom"/>
</dbReference>
<dbReference type="InterPro" id="IPR035897">
    <property type="entry name" value="Toll_tir_struct_dom_sf"/>
</dbReference>
<dbReference type="PANTHER" id="PTHR11017:SF529">
    <property type="entry name" value="DISEASE RESISTANCE PROTEIN CHS1"/>
    <property type="match status" value="1"/>
</dbReference>
<dbReference type="PANTHER" id="PTHR11017">
    <property type="entry name" value="LEUCINE-RICH REPEAT-CONTAINING PROTEIN"/>
    <property type="match status" value="1"/>
</dbReference>
<dbReference type="Pfam" id="PF00931">
    <property type="entry name" value="NB-ARC"/>
    <property type="match status" value="1"/>
</dbReference>
<dbReference type="Pfam" id="PF01582">
    <property type="entry name" value="TIR"/>
    <property type="match status" value="1"/>
</dbReference>
<dbReference type="PRINTS" id="PR00364">
    <property type="entry name" value="DISEASERSIST"/>
</dbReference>
<dbReference type="SUPFAM" id="SSF52540">
    <property type="entry name" value="P-loop containing nucleoside triphosphate hydrolases"/>
    <property type="match status" value="1"/>
</dbReference>
<dbReference type="SUPFAM" id="SSF52200">
    <property type="entry name" value="Toll/Interleukin receptor TIR domain"/>
    <property type="match status" value="1"/>
</dbReference>
<dbReference type="PROSITE" id="PS50104">
    <property type="entry name" value="TIR"/>
    <property type="match status" value="1"/>
</dbReference>
<comment type="function">
    <text evidence="4 5 6">Confers resistance to low temperatures by limiting chloroplast damage and cell death, thus maintaining growth homeostasis (PubMed:16667557, PubMed:23617639, PubMed:23651299). Regulates steryl-esters and sterols accumulation (PubMed:16667557). Limits leaf necrosis associated with virulent bacterial infection (e.g. Pseudomonas syringae pv. tomato DC3000) (PubMed:23617639).</text>
</comment>
<comment type="catalytic activity">
    <reaction evidence="2">
        <text>NAD(+) + H2O = ADP-D-ribose + nicotinamide + H(+)</text>
        <dbReference type="Rhea" id="RHEA:16301"/>
        <dbReference type="ChEBI" id="CHEBI:15377"/>
        <dbReference type="ChEBI" id="CHEBI:15378"/>
        <dbReference type="ChEBI" id="CHEBI:17154"/>
        <dbReference type="ChEBI" id="CHEBI:57540"/>
        <dbReference type="ChEBI" id="CHEBI:57967"/>
        <dbReference type="EC" id="3.2.2.6"/>
    </reaction>
    <physiologicalReaction direction="left-to-right" evidence="2">
        <dbReference type="Rhea" id="RHEA:16302"/>
    </physiologicalReaction>
</comment>
<comment type="subcellular location">
    <subcellularLocation>
        <location evidence="5 6">Cytoplasm</location>
    </subcellularLocation>
    <subcellularLocation>
        <location evidence="6">Nucleus</location>
    </subcellularLocation>
</comment>
<comment type="tissue specificity">
    <text evidence="5 6">Mostly expressed in leaves and flowers (mainly in sepals), and, at a lower intensity, in stems (PubMed:23617639, PubMed:23651299). Present at low levels in roots and seeds (PubMed:23617639).</text>
</comment>
<comment type="induction">
    <text evidence="6">Stabilized by low temperatures (at protein level).</text>
</comment>
<comment type="domain">
    <text evidence="2">The TIR domain mediates NAD(+) hydrolase (NADase) activity. Self-association of TIR domains is required for NADase activity.</text>
</comment>
<comment type="disruption phenotype">
    <text evidence="5">RNAi lines display chilling sensitivity. Massive necrotic response to virulent Pseudomonas syringae pv. tomato infection, but normal bacterial proliferation.</text>
</comment>
<comment type="sequence caution" evidence="8">
    <conflict type="erroneous gene model prediction">
        <sequence resource="EMBL-CDS" id="AAF79471"/>
    </conflict>
</comment>
<reference key="1">
    <citation type="journal article" date="2000" name="Nature">
        <title>Sequence and analysis of chromosome 1 of the plant Arabidopsis thaliana.</title>
        <authorList>
            <person name="Theologis A."/>
            <person name="Ecker J.R."/>
            <person name="Palm C.J."/>
            <person name="Federspiel N.A."/>
            <person name="Kaul S."/>
            <person name="White O."/>
            <person name="Alonso J."/>
            <person name="Altafi H."/>
            <person name="Araujo R."/>
            <person name="Bowman C.L."/>
            <person name="Brooks S.Y."/>
            <person name="Buehler E."/>
            <person name="Chan A."/>
            <person name="Chao Q."/>
            <person name="Chen H."/>
            <person name="Cheuk R.F."/>
            <person name="Chin C.W."/>
            <person name="Chung M.K."/>
            <person name="Conn L."/>
            <person name="Conway A.B."/>
            <person name="Conway A.R."/>
            <person name="Creasy T.H."/>
            <person name="Dewar K."/>
            <person name="Dunn P."/>
            <person name="Etgu P."/>
            <person name="Feldblyum T.V."/>
            <person name="Feng J.-D."/>
            <person name="Fong B."/>
            <person name="Fujii C.Y."/>
            <person name="Gill J.E."/>
            <person name="Goldsmith A.D."/>
            <person name="Haas B."/>
            <person name="Hansen N.F."/>
            <person name="Hughes B."/>
            <person name="Huizar L."/>
            <person name="Hunter J.L."/>
            <person name="Jenkins J."/>
            <person name="Johnson-Hopson C."/>
            <person name="Khan S."/>
            <person name="Khaykin E."/>
            <person name="Kim C.J."/>
            <person name="Koo H.L."/>
            <person name="Kremenetskaia I."/>
            <person name="Kurtz D.B."/>
            <person name="Kwan A."/>
            <person name="Lam B."/>
            <person name="Langin-Hooper S."/>
            <person name="Lee A."/>
            <person name="Lee J.M."/>
            <person name="Lenz C.A."/>
            <person name="Li J.H."/>
            <person name="Li Y.-P."/>
            <person name="Lin X."/>
            <person name="Liu S.X."/>
            <person name="Liu Z.A."/>
            <person name="Luros J.S."/>
            <person name="Maiti R."/>
            <person name="Marziali A."/>
            <person name="Militscher J."/>
            <person name="Miranda M."/>
            <person name="Nguyen M."/>
            <person name="Nierman W.C."/>
            <person name="Osborne B.I."/>
            <person name="Pai G."/>
            <person name="Peterson J."/>
            <person name="Pham P.K."/>
            <person name="Rizzo M."/>
            <person name="Rooney T."/>
            <person name="Rowley D."/>
            <person name="Sakano H."/>
            <person name="Salzberg S.L."/>
            <person name="Schwartz J.R."/>
            <person name="Shinn P."/>
            <person name="Southwick A.M."/>
            <person name="Sun H."/>
            <person name="Tallon L.J."/>
            <person name="Tambunga G."/>
            <person name="Toriumi M.J."/>
            <person name="Town C.D."/>
            <person name="Utterback T."/>
            <person name="Van Aken S."/>
            <person name="Vaysberg M."/>
            <person name="Vysotskaia V.S."/>
            <person name="Walker M."/>
            <person name="Wu D."/>
            <person name="Yu G."/>
            <person name="Fraser C.M."/>
            <person name="Venter J.C."/>
            <person name="Davis R.W."/>
        </authorList>
    </citation>
    <scope>NUCLEOTIDE SEQUENCE [LARGE SCALE GENOMIC DNA]</scope>
    <source>
        <strain>cv. Columbia</strain>
    </source>
</reference>
<reference key="2">
    <citation type="journal article" date="2017" name="Plant J.">
        <title>Araport11: a complete reannotation of the Arabidopsis thaliana reference genome.</title>
        <authorList>
            <person name="Cheng C.Y."/>
            <person name="Krishnakumar V."/>
            <person name="Chan A.P."/>
            <person name="Thibaud-Nissen F."/>
            <person name="Schobel S."/>
            <person name="Town C.D."/>
        </authorList>
    </citation>
    <scope>GENOME REANNOTATION</scope>
    <source>
        <strain>cv. Columbia</strain>
    </source>
</reference>
<reference key="3">
    <citation type="journal article" date="1990" name="Plant Physiol.">
        <title>A chilling sensitive mutant of Arabidopsis with altered steryl-ester metabolism.</title>
        <authorList>
            <person name="Hugly S."/>
            <person name="McCourt P."/>
            <person name="Browse J."/>
            <person name="Patterson G.W."/>
            <person name="Somerville C."/>
        </authorList>
    </citation>
    <scope>FUNCTION</scope>
    <scope>MUTAGENESIS OF ALA-10</scope>
    <source>
        <strain>cv. Columbia</strain>
    </source>
</reference>
<reference key="4">
    <citation type="journal article" date="2002" name="Plant J.">
        <title>TIR-X and TIR-NBS proteins: two new families related to disease resistance TIR-NBS-LRR proteins encoded in Arabidopsis and other plant genomes.</title>
        <authorList>
            <person name="Meyers B.C."/>
            <person name="Morgante M."/>
            <person name="Michelmore R.W."/>
        </authorList>
    </citation>
    <scope>GENE FAMILY</scope>
</reference>
<reference key="5">
    <citation type="journal article" date="2000" name="J. Membr. Biol.">
        <title>Permeability of boric acid across lipid bilayers and factors affecting it.</title>
        <authorList>
            <person name="Dordas C."/>
            <person name="Brown P.H."/>
        </authorList>
    </citation>
    <scope>MUTAGENESIS OF ALA-10</scope>
    <source>
        <strain>cv. Columbia</strain>
    </source>
</reference>
<reference key="6">
    <citation type="journal article" date="2013" name="Plant J.">
        <title>A TIR-NBS protein encoded by Arabidopsis CHILLING SENSITIVE 1 (CHS1) limits chloroplast damage and cell death at low temperature.</title>
        <authorList>
            <person name="Zbierzak A.M."/>
            <person name="Porfirova S."/>
            <person name="Griebel T."/>
            <person name="Melzer M."/>
            <person name="Parker J.E."/>
            <person name="Doermann P."/>
        </authorList>
    </citation>
    <scope>FUNCTION</scope>
    <scope>DISRUPTION PHENOTYPE</scope>
    <scope>MUTAGENESIS OF ALA-10</scope>
    <scope>TISSUE SPECIFICITY</scope>
    <scope>SUBCELLULAR LOCATION</scope>
    <source>
        <strain>cv. Columbia</strain>
    </source>
</reference>
<reference key="7">
    <citation type="journal article" date="2013" name="Plant J.">
        <title>A missense mutation in CHS1, a TIR-NB protein, induces chilling sensitivity in Arabidopsis.</title>
        <authorList>
            <person name="Wang Y."/>
            <person name="Zhang Y."/>
            <person name="Wang Z."/>
            <person name="Zhang X."/>
            <person name="Yang S."/>
        </authorList>
    </citation>
    <scope>FUNCTION</scope>
    <scope>MUTAGENESIS OF ALA-10</scope>
    <scope>INDUCTION BY LOW TEMPERATURES</scope>
    <scope>TISSUE SPECIFICITY</scope>
    <scope>SUBCELLULAR LOCATION</scope>
    <source>
        <strain>cv. Columbia</strain>
        <strain>cv. Landsberg erecta</strain>
    </source>
</reference>
<sequence>MSTSYSFLLAGRELDVFLSFSGKIALDVDFGYDLSRNGIKAFKSESWKESSFKPIDLRTLEALTESKVAVVMTSDEEVSSVGFLEELIVIIEFQEKRSLTVIPVFLTKHPLDVEKVSQIFPERAKIWRTAIAKLDNIAAQYSFSRNLAVMHGTHRIKQIADDIRLMFLSSASSDFKGLAGMDRHMKALYALLALESDEKVRTIGIWGSSGVGKTTLARYTYAEISVKFQAHVFLENVENMKEMLLPSENFEGEDLRSVNHEMNEMAEAKQKHRKVLLIADGVNNIEQGKWIAENANWFAPGSRVILITQEKSLLVQSGVNHVYEVGSLRYDEALQLFSRFAFKQPYPSPDFERLSVRAVQLAGFLPVTIRLFGSFLTGRDKEEWEATLLKLNAKQGKDIKEVWKIMEALEDKDIVEASQR</sequence>
<protein>
    <recommendedName>
        <fullName evidence="7">Disease resistance protein CHS1</fullName>
        <ecNumber evidence="2">3.2.2.6</ecNumber>
    </recommendedName>
    <alternativeName>
        <fullName evidence="7">Protein CHILLING SENSITIVE 1</fullName>
    </alternativeName>
</protein>
<accession>F4I902</accession>
<accession>Q9LNP4</accession>